<reference key="1">
    <citation type="journal article" date="2006" name="Science">
        <title>Large-scale sequence analysis of avian influenza isolates.</title>
        <authorList>
            <person name="Obenauer J.C."/>
            <person name="Denson J."/>
            <person name="Mehta P.K."/>
            <person name="Su X."/>
            <person name="Mukatira S."/>
            <person name="Finkelstein D.B."/>
            <person name="Xu X."/>
            <person name="Wang J."/>
            <person name="Ma J."/>
            <person name="Fan Y."/>
            <person name="Rakestraw K.M."/>
            <person name="Webster R.G."/>
            <person name="Hoffmann E."/>
            <person name="Krauss S."/>
            <person name="Zheng J."/>
            <person name="Zhang Z."/>
            <person name="Naeve C.W."/>
        </authorList>
    </citation>
    <scope>NUCLEOTIDE SEQUENCE [GENOMIC RNA]</scope>
</reference>
<comment type="function">
    <text evidence="1">Inhibits post-transcriptional processing of cellular pre-mRNA, by binding and inhibiting two cellular proteins that are required for the 3'-end processing of cellular pre-mRNAs: the 30 kDa cleavage and polyadenylation specificity factor/CPSF4 and the poly(A)-binding protein 2/PABPN1. In turn, unprocessed 3' end pre-mRNAs accumulate in the host nucleus and are no longer exported to the cytoplasm. Cellular protein synthesis is thereby shut off very early after virus infection. Viral protein synthesis is not affected by the inhibition of the cellular 3' end processing machinery because the poly(A) tails of viral mRNAs are produced by the viral polymerase through a stuttering mechanism. Prevents the establishment of the cellular antiviral state by inhibiting TRIM25-mediated RIGI ubiquitination, which normally triggers the antiviral transduction signal that leads to the activation of type I IFN genes by transcription factors IRF3 and IRF7. Also binds poly(A) and U6 snRNA. Inhibits the integrated stress response (ISR) in the infected cell by blocking dsRNA binding by EIF2AK2/PKR and further phosphorylation of EIF2S1/EIF-2ALPHA. Stress granule formation is thus inhibited, which allows protein synthesis and viral replication.</text>
</comment>
<comment type="subunit">
    <text evidence="1">Homodimer. Interacts with host TRIM25 (via coiled coil); this interaction specifically inhibits TRIM25 multimerization and TRIM25-mediated RIGI CARD ubiquitination. Interacts with human EIF2AK2/PKR, CPSF4, IVNS1ABP and PABPN1.</text>
</comment>
<comment type="subcellular location">
    <subcellularLocation>
        <location evidence="1">Host nucleus</location>
    </subcellularLocation>
    <subcellularLocation>
        <location evidence="1">Host cytoplasm</location>
    </subcellularLocation>
    <text evidence="1">In uninfected, transfected cells, NS1 is localized in the nucleus. Only in virus infected cells, the nuclear export signal is unveiled, presumably by a viral protein, and a fraction of NS1 is exported in the cytoplasm.</text>
</comment>
<comment type="alternative products">
    <event type="alternative splicing"/>
    <isoform>
        <id>Q0A462-1</id>
        <name>NS1</name>
        <sequence type="displayed"/>
    </isoform>
    <isoform>
        <id>Q0A463-1</id>
        <name>NEP</name>
        <name>NS2</name>
        <sequence type="external"/>
    </isoform>
</comment>
<comment type="domain">
    <text evidence="1">The dsRNA-binding region is required for suppression of RNA silencing.</text>
</comment>
<comment type="PTM">
    <text evidence="1">Upon interferon induction, ISGylated via host HERC5; this results in the impairment of NS1 interaction with RNA targets due to its inability to form homodimers and to interact with host EIF2AK2/PKR.</text>
</comment>
<comment type="similarity">
    <text evidence="1">Belongs to the influenza A viruses NS1 family.</text>
</comment>
<proteinExistence type="inferred from homology"/>
<evidence type="ECO:0000255" key="1">
    <source>
        <dbReference type="HAMAP-Rule" id="MF_04066"/>
    </source>
</evidence>
<evidence type="ECO:0000256" key="2">
    <source>
        <dbReference type="SAM" id="MobiDB-lite"/>
    </source>
</evidence>
<dbReference type="EMBL" id="CY014661">
    <property type="protein sequence ID" value="ABI84521.1"/>
    <property type="molecule type" value="Genomic_RNA"/>
</dbReference>
<dbReference type="SMR" id="Q0A462"/>
<dbReference type="Proteomes" id="UP000007770">
    <property type="component" value="Genome"/>
</dbReference>
<dbReference type="GO" id="GO:0030430">
    <property type="term" value="C:host cell cytoplasm"/>
    <property type="evidence" value="ECO:0007669"/>
    <property type="project" value="UniProtKB-SubCell"/>
</dbReference>
<dbReference type="GO" id="GO:0042025">
    <property type="term" value="C:host cell nucleus"/>
    <property type="evidence" value="ECO:0007669"/>
    <property type="project" value="UniProtKB-SubCell"/>
</dbReference>
<dbReference type="GO" id="GO:0030291">
    <property type="term" value="F:protein serine/threonine kinase inhibitor activity"/>
    <property type="evidence" value="ECO:0007669"/>
    <property type="project" value="UniProtKB-KW"/>
</dbReference>
<dbReference type="GO" id="GO:0003723">
    <property type="term" value="F:RNA binding"/>
    <property type="evidence" value="ECO:0007669"/>
    <property type="project" value="UniProtKB-KW"/>
</dbReference>
<dbReference type="GO" id="GO:0039540">
    <property type="term" value="P:symbiont-mediated suppression of host cytoplasmic pattern recognition receptor signaling pathway via inhibition of RIG-I activity"/>
    <property type="evidence" value="ECO:0007669"/>
    <property type="project" value="UniProtKB-KW"/>
</dbReference>
<dbReference type="GO" id="GO:0039657">
    <property type="term" value="P:symbiont-mediated suppression of host gene expression"/>
    <property type="evidence" value="ECO:0007669"/>
    <property type="project" value="UniProtKB-KW"/>
</dbReference>
<dbReference type="GO" id="GO:0039524">
    <property type="term" value="P:symbiont-mediated suppression of host mRNA processing"/>
    <property type="evidence" value="ECO:0007669"/>
    <property type="project" value="UniProtKB-KW"/>
</dbReference>
<dbReference type="GO" id="GO:0039580">
    <property type="term" value="P:symbiont-mediated suppression of host PKR/eIFalpha signaling"/>
    <property type="evidence" value="ECO:0007669"/>
    <property type="project" value="UniProtKB-KW"/>
</dbReference>
<dbReference type="GO" id="GO:0039502">
    <property type="term" value="P:symbiont-mediated suppression of host type I interferon-mediated signaling pathway"/>
    <property type="evidence" value="ECO:0007669"/>
    <property type="project" value="UniProtKB-KW"/>
</dbReference>
<dbReference type="FunFam" id="1.10.287.10:FF:000001">
    <property type="entry name" value="Non-structural protein 1"/>
    <property type="match status" value="1"/>
</dbReference>
<dbReference type="FunFam" id="3.30.420.330:FF:000001">
    <property type="entry name" value="Non-structural protein 1"/>
    <property type="match status" value="1"/>
</dbReference>
<dbReference type="Gene3D" id="3.30.420.330">
    <property type="entry name" value="Influenza virus non-structural protein, effector domain"/>
    <property type="match status" value="1"/>
</dbReference>
<dbReference type="Gene3D" id="1.10.287.10">
    <property type="entry name" value="S15/NS1, RNA-binding"/>
    <property type="match status" value="1"/>
</dbReference>
<dbReference type="HAMAP" id="MF_04066">
    <property type="entry name" value="INFV_NS1"/>
    <property type="match status" value="1"/>
</dbReference>
<dbReference type="InterPro" id="IPR004208">
    <property type="entry name" value="NS1"/>
</dbReference>
<dbReference type="InterPro" id="IPR000256">
    <property type="entry name" value="NS1A"/>
</dbReference>
<dbReference type="InterPro" id="IPR038064">
    <property type="entry name" value="NS1A_effect_dom-like_sf"/>
</dbReference>
<dbReference type="InterPro" id="IPR009068">
    <property type="entry name" value="uS15_NS1_RNA-bd_sf"/>
</dbReference>
<dbReference type="Pfam" id="PF00600">
    <property type="entry name" value="Flu_NS1"/>
    <property type="match status" value="1"/>
</dbReference>
<dbReference type="SUPFAM" id="SSF143021">
    <property type="entry name" value="Ns1 effector domain-like"/>
    <property type="match status" value="1"/>
</dbReference>
<dbReference type="SUPFAM" id="SSF47060">
    <property type="entry name" value="S15/NS1 RNA-binding domain"/>
    <property type="match status" value="1"/>
</dbReference>
<name>NS1_I68A3</name>
<protein>
    <recommendedName>
        <fullName evidence="1">Non-structural protein 1</fullName>
        <shortName evidence="1">NS1</shortName>
    </recommendedName>
    <alternativeName>
        <fullName evidence="1">NS1A</fullName>
    </alternativeName>
</protein>
<accession>Q0A462</accession>
<feature type="chain" id="PRO_0000274807" description="Non-structural protein 1">
    <location>
        <begin position="1"/>
        <end position="230"/>
    </location>
</feature>
<feature type="region of interest" description="RNA-binding and homodimerization" evidence="1">
    <location>
        <begin position="1"/>
        <end position="73"/>
    </location>
</feature>
<feature type="region of interest" description="CPSF4-binding" evidence="1">
    <location>
        <begin position="180"/>
        <end position="215"/>
    </location>
</feature>
<feature type="region of interest" description="Disordered" evidence="2">
    <location>
        <begin position="205"/>
        <end position="230"/>
    </location>
</feature>
<feature type="region of interest" description="PABPN1-binding" evidence="1">
    <location>
        <begin position="223"/>
        <end position="230"/>
    </location>
</feature>
<feature type="short sequence motif" description="Nuclear localization signal" evidence="1">
    <location>
        <begin position="34"/>
        <end position="38"/>
    </location>
</feature>
<feature type="short sequence motif" description="Nuclear export signal" evidence="1">
    <location>
        <begin position="137"/>
        <end position="146"/>
    </location>
</feature>
<gene>
    <name evidence="1" type="primary">NS</name>
</gene>
<sequence>MDSNTVSSFQVDCFLWHVRKRFADQELGDAPFLDRLRRDQKSLRGRGSTLGLDIETATRAGKQIVERILEEESDEALKMTIASVPASRYLTDMTLEEMSRDWFMLMPKQKVAGSLCIRMDQAIMDKNIILKANFSVIFDRLETLILLRAFTEEGAIVGEISPLPSLPGHIDEDVKNAIGVLIGGLEWNDNTVRVSETLQRFAWRSSNEDGRPPLPPKQKRKMARTIESEV</sequence>
<organism>
    <name type="scientific">Influenza A virus (strain A/Turkey/Ontario/6118/1968 H8N4)</name>
    <dbReference type="NCBI Taxonomy" id="311175"/>
    <lineage>
        <taxon>Viruses</taxon>
        <taxon>Riboviria</taxon>
        <taxon>Orthornavirae</taxon>
        <taxon>Negarnaviricota</taxon>
        <taxon>Polyploviricotina</taxon>
        <taxon>Insthoviricetes</taxon>
        <taxon>Articulavirales</taxon>
        <taxon>Orthomyxoviridae</taxon>
        <taxon>Alphainfluenzavirus</taxon>
        <taxon>Alphainfluenzavirus influenzae</taxon>
        <taxon>Influenza A virus</taxon>
    </lineage>
</organism>
<keyword id="KW-0025">Alternative splicing</keyword>
<keyword id="KW-1262">Eukaryotic host gene expression shutoff by virus</keyword>
<keyword id="KW-1035">Host cytoplasm</keyword>
<keyword id="KW-1190">Host gene expression shutoff by virus</keyword>
<keyword id="KW-1192">Host mRNA suppression by virus</keyword>
<keyword id="KW-1048">Host nucleus</keyword>
<keyword id="KW-0945">Host-virus interaction</keyword>
<keyword id="KW-1090">Inhibition of host innate immune response by virus</keyword>
<keyword id="KW-1114">Inhibition of host interferon signaling pathway by virus</keyword>
<keyword id="KW-1102">Inhibition of host PKR by virus</keyword>
<keyword id="KW-1103">Inhibition of host pre-mRNA processing by virus</keyword>
<keyword id="KW-1088">Inhibition of host RIG-I by virus</keyword>
<keyword id="KW-1113">Inhibition of host RLR pathway by virus</keyword>
<keyword id="KW-0922">Interferon antiviral system evasion</keyword>
<keyword id="KW-0694">RNA-binding</keyword>
<keyword id="KW-0832">Ubl conjugation</keyword>
<keyword id="KW-0899">Viral immunoevasion</keyword>
<organismHost>
    <name type="scientific">Aves</name>
    <dbReference type="NCBI Taxonomy" id="8782"/>
</organismHost>